<dbReference type="EMBL" id="AB026908">
    <property type="protein sequence ID" value="BAA84703.1"/>
    <property type="molecule type" value="mRNA"/>
</dbReference>
<dbReference type="EMBL" id="AF083247">
    <property type="protein sequence ID" value="AAD39845.1"/>
    <property type="molecule type" value="mRNA"/>
</dbReference>
<dbReference type="EMBL" id="AL080081">
    <property type="protein sequence ID" value="CAB45701.1"/>
    <property type="molecule type" value="mRNA"/>
</dbReference>
<dbReference type="EMBL" id="AY359045">
    <property type="protein sequence ID" value="AAQ89404.1"/>
    <property type="molecule type" value="mRNA"/>
</dbReference>
<dbReference type="EMBL" id="BC028912">
    <property type="protein sequence ID" value="AAH28912.1"/>
    <property type="molecule type" value="mRNA"/>
</dbReference>
<dbReference type="CCDS" id="CCDS5752.1"/>
<dbReference type="PIR" id="T12472">
    <property type="entry name" value="T12472"/>
</dbReference>
<dbReference type="RefSeq" id="NP_036460.1">
    <property type="nucleotide sequence ID" value="NM_012328.3"/>
</dbReference>
<dbReference type="PDB" id="2CTR">
    <property type="method" value="NMR"/>
    <property type="chains" value="A=26-100"/>
</dbReference>
<dbReference type="PDBsum" id="2CTR"/>
<dbReference type="SMR" id="Q9UBS3"/>
<dbReference type="BioGRID" id="110354">
    <property type="interactions" value="222"/>
</dbReference>
<dbReference type="CORUM" id="Q9UBS3"/>
<dbReference type="FunCoup" id="Q9UBS3">
    <property type="interactions" value="896"/>
</dbReference>
<dbReference type="IntAct" id="Q9UBS3">
    <property type="interactions" value="152"/>
</dbReference>
<dbReference type="MINT" id="Q9UBS3"/>
<dbReference type="STRING" id="9606.ENSP00000249356"/>
<dbReference type="iPTMnet" id="Q9UBS3"/>
<dbReference type="PhosphoSitePlus" id="Q9UBS3"/>
<dbReference type="BioMuta" id="DNAJB9"/>
<dbReference type="DMDM" id="18203496"/>
<dbReference type="jPOST" id="Q9UBS3"/>
<dbReference type="MassIVE" id="Q9UBS3"/>
<dbReference type="PaxDb" id="9606-ENSP00000249356"/>
<dbReference type="PeptideAtlas" id="Q9UBS3"/>
<dbReference type="ProteomicsDB" id="84045"/>
<dbReference type="Pumba" id="Q9UBS3"/>
<dbReference type="Antibodypedia" id="31469">
    <property type="antibodies" value="233 antibodies from 31 providers"/>
</dbReference>
<dbReference type="DNASU" id="4189"/>
<dbReference type="Ensembl" id="ENST00000249356.4">
    <property type="protein sequence ID" value="ENSP00000249356.3"/>
    <property type="gene ID" value="ENSG00000128590.5"/>
</dbReference>
<dbReference type="GeneID" id="4189"/>
<dbReference type="KEGG" id="hsa:4189"/>
<dbReference type="MANE-Select" id="ENST00000249356.4">
    <property type="protein sequence ID" value="ENSP00000249356.3"/>
    <property type="RefSeq nucleotide sequence ID" value="NM_012328.3"/>
    <property type="RefSeq protein sequence ID" value="NP_036460.1"/>
</dbReference>
<dbReference type="UCSC" id="uc003vfn.4">
    <property type="organism name" value="human"/>
</dbReference>
<dbReference type="AGR" id="HGNC:6968"/>
<dbReference type="CTD" id="4189"/>
<dbReference type="DisGeNET" id="4189"/>
<dbReference type="GeneCards" id="DNAJB9"/>
<dbReference type="HGNC" id="HGNC:6968">
    <property type="gene designation" value="DNAJB9"/>
</dbReference>
<dbReference type="HPA" id="ENSG00000128590">
    <property type="expression patterns" value="Low tissue specificity"/>
</dbReference>
<dbReference type="MIM" id="602634">
    <property type="type" value="gene"/>
</dbReference>
<dbReference type="neXtProt" id="NX_Q9UBS3"/>
<dbReference type="OpenTargets" id="ENSG00000128590"/>
<dbReference type="PharmGKB" id="PA27419"/>
<dbReference type="VEuPathDB" id="HostDB:ENSG00000128590"/>
<dbReference type="eggNOG" id="KOG0714">
    <property type="taxonomic scope" value="Eukaryota"/>
</dbReference>
<dbReference type="GeneTree" id="ENSGT00940000156246"/>
<dbReference type="HOGENOM" id="CLU_077239_0_0_1"/>
<dbReference type="InParanoid" id="Q9UBS3"/>
<dbReference type="OMA" id="YNFRQHY"/>
<dbReference type="OrthoDB" id="376357at2759"/>
<dbReference type="PAN-GO" id="Q9UBS3">
    <property type="GO annotations" value="4 GO annotations based on evolutionary models"/>
</dbReference>
<dbReference type="PhylomeDB" id="Q9UBS3"/>
<dbReference type="TreeFam" id="TF105143"/>
<dbReference type="PathwayCommons" id="Q9UBS3"/>
<dbReference type="Reactome" id="R-HSA-381038">
    <property type="pathway name" value="XBP1(S) activates chaperone genes"/>
</dbReference>
<dbReference type="SignaLink" id="Q9UBS3"/>
<dbReference type="SIGNOR" id="Q9UBS3"/>
<dbReference type="BioGRID-ORCS" id="4189">
    <property type="hits" value="13 hits in 1151 CRISPR screens"/>
</dbReference>
<dbReference type="ChiTaRS" id="DNAJB9">
    <property type="organism name" value="human"/>
</dbReference>
<dbReference type="EvolutionaryTrace" id="Q9UBS3"/>
<dbReference type="GeneWiki" id="DNAJB9"/>
<dbReference type="GenomeRNAi" id="4189"/>
<dbReference type="Pharos" id="Q9UBS3">
    <property type="development level" value="Tbio"/>
</dbReference>
<dbReference type="PRO" id="PR:Q9UBS3"/>
<dbReference type="Proteomes" id="UP000005640">
    <property type="component" value="Chromosome 7"/>
</dbReference>
<dbReference type="RNAct" id="Q9UBS3">
    <property type="molecule type" value="protein"/>
</dbReference>
<dbReference type="Bgee" id="ENSG00000128590">
    <property type="expression patterns" value="Expressed in choroid plexus epithelium and 210 other cell types or tissues"/>
</dbReference>
<dbReference type="ExpressionAtlas" id="Q9UBS3">
    <property type="expression patterns" value="baseline and differential"/>
</dbReference>
<dbReference type="GO" id="GO:0005737">
    <property type="term" value="C:cytoplasm"/>
    <property type="evidence" value="ECO:0000250"/>
    <property type="project" value="UniProtKB"/>
</dbReference>
<dbReference type="GO" id="GO:0005783">
    <property type="term" value="C:endoplasmic reticulum"/>
    <property type="evidence" value="ECO:0000314"/>
    <property type="project" value="UniProtKB"/>
</dbReference>
<dbReference type="GO" id="GO:0005788">
    <property type="term" value="C:endoplasmic reticulum lumen"/>
    <property type="evidence" value="ECO:0007669"/>
    <property type="project" value="UniProtKB-SubCell"/>
</dbReference>
<dbReference type="GO" id="GO:0005789">
    <property type="term" value="C:endoplasmic reticulum membrane"/>
    <property type="evidence" value="ECO:0000304"/>
    <property type="project" value="Reactome"/>
</dbReference>
<dbReference type="GO" id="GO:0070062">
    <property type="term" value="C:extracellular exosome"/>
    <property type="evidence" value="ECO:0007005"/>
    <property type="project" value="UniProtKB"/>
</dbReference>
<dbReference type="GO" id="GO:0005730">
    <property type="term" value="C:nucleolus"/>
    <property type="evidence" value="ECO:0000250"/>
    <property type="project" value="UniProtKB"/>
</dbReference>
<dbReference type="GO" id="GO:0030544">
    <property type="term" value="F:Hsp70 protein binding"/>
    <property type="evidence" value="ECO:0007669"/>
    <property type="project" value="Ensembl"/>
</dbReference>
<dbReference type="GO" id="GO:0051787">
    <property type="term" value="F:misfolded protein binding"/>
    <property type="evidence" value="ECO:0000314"/>
    <property type="project" value="UniProtKB"/>
</dbReference>
<dbReference type="GO" id="GO:0051087">
    <property type="term" value="F:protein-folding chaperone binding"/>
    <property type="evidence" value="ECO:0000250"/>
    <property type="project" value="UniProtKB"/>
</dbReference>
<dbReference type="GO" id="GO:0030183">
    <property type="term" value="P:B cell differentiation"/>
    <property type="evidence" value="ECO:0000250"/>
    <property type="project" value="UniProtKB"/>
</dbReference>
<dbReference type="GO" id="GO:0036503">
    <property type="term" value="P:ERAD pathway"/>
    <property type="evidence" value="ECO:0000315"/>
    <property type="project" value="UniProtKB"/>
</dbReference>
<dbReference type="GO" id="GO:1903895">
    <property type="term" value="P:negative regulation of IRE1-mediated unfolded protein response"/>
    <property type="evidence" value="ECO:0000250"/>
    <property type="project" value="UniProtKB"/>
</dbReference>
<dbReference type="GO" id="GO:0002639">
    <property type="term" value="P:positive regulation of immunoglobulin production"/>
    <property type="evidence" value="ECO:0000250"/>
    <property type="project" value="UniProtKB"/>
</dbReference>
<dbReference type="GO" id="GO:0034976">
    <property type="term" value="P:response to endoplasmic reticulum stress"/>
    <property type="evidence" value="ECO:0000250"/>
    <property type="project" value="UniProtKB"/>
</dbReference>
<dbReference type="GO" id="GO:0006986">
    <property type="term" value="P:response to unfolded protein"/>
    <property type="evidence" value="ECO:0007669"/>
    <property type="project" value="UniProtKB-KW"/>
</dbReference>
<dbReference type="CDD" id="cd06257">
    <property type="entry name" value="DnaJ"/>
    <property type="match status" value="1"/>
</dbReference>
<dbReference type="FunFam" id="1.10.287.110:FF:000054">
    <property type="entry name" value="dnaJ homolog subfamily B member 9"/>
    <property type="match status" value="1"/>
</dbReference>
<dbReference type="Gene3D" id="1.10.287.110">
    <property type="entry name" value="DnaJ domain"/>
    <property type="match status" value="1"/>
</dbReference>
<dbReference type="InterPro" id="IPR001623">
    <property type="entry name" value="DnaJ_domain"/>
</dbReference>
<dbReference type="InterPro" id="IPR018253">
    <property type="entry name" value="DnaJ_domain_CS"/>
</dbReference>
<dbReference type="InterPro" id="IPR051948">
    <property type="entry name" value="Hsp70_co-chaperone_J-domain"/>
</dbReference>
<dbReference type="InterPro" id="IPR036869">
    <property type="entry name" value="J_dom_sf"/>
</dbReference>
<dbReference type="PANTHER" id="PTHR44360">
    <property type="entry name" value="DNAJ HOMOLOG SUBFAMILY B MEMBER 9"/>
    <property type="match status" value="1"/>
</dbReference>
<dbReference type="PANTHER" id="PTHR44360:SF1">
    <property type="entry name" value="DNAJ HOMOLOG SUBFAMILY B MEMBER 9"/>
    <property type="match status" value="1"/>
</dbReference>
<dbReference type="Pfam" id="PF00226">
    <property type="entry name" value="DnaJ"/>
    <property type="match status" value="1"/>
</dbReference>
<dbReference type="PRINTS" id="PR00625">
    <property type="entry name" value="JDOMAIN"/>
</dbReference>
<dbReference type="SMART" id="SM00271">
    <property type="entry name" value="DnaJ"/>
    <property type="match status" value="1"/>
</dbReference>
<dbReference type="SUPFAM" id="SSF46565">
    <property type="entry name" value="Chaperone J-domain"/>
    <property type="match status" value="1"/>
</dbReference>
<dbReference type="PROSITE" id="PS00636">
    <property type="entry name" value="DNAJ_1"/>
    <property type="match status" value="1"/>
</dbReference>
<dbReference type="PROSITE" id="PS50076">
    <property type="entry name" value="DNAJ_2"/>
    <property type="match status" value="1"/>
</dbReference>
<organism>
    <name type="scientific">Homo sapiens</name>
    <name type="common">Human</name>
    <dbReference type="NCBI Taxonomy" id="9606"/>
    <lineage>
        <taxon>Eukaryota</taxon>
        <taxon>Metazoa</taxon>
        <taxon>Chordata</taxon>
        <taxon>Craniata</taxon>
        <taxon>Vertebrata</taxon>
        <taxon>Euteleostomi</taxon>
        <taxon>Mammalia</taxon>
        <taxon>Eutheria</taxon>
        <taxon>Euarchontoglires</taxon>
        <taxon>Primates</taxon>
        <taxon>Haplorrhini</taxon>
        <taxon>Catarrhini</taxon>
        <taxon>Hominidae</taxon>
        <taxon>Homo</taxon>
    </lineage>
</organism>
<accession>Q9UBS3</accession>
<proteinExistence type="evidence at protein level"/>
<name>DNJB9_HUMAN</name>
<protein>
    <recommendedName>
        <fullName evidence="10">DnaJ homolog subfamily B member 9</fullName>
    </recommendedName>
    <alternativeName>
        <fullName evidence="8">Endoplasmic reticulum DNA J domain-containing protein 4</fullName>
        <shortName evidence="8">ER-resident protein ERdj4</shortName>
        <shortName evidence="8">ERdj4</shortName>
    </alternativeName>
    <alternativeName>
        <fullName evidence="9">Microvascular endothelial differentiation gene 1 protein</fullName>
        <shortName evidence="9">Mdg-1</shortName>
    </alternativeName>
</protein>
<sequence>MATPQSIFIFAICILMITELILASKSYYDILGVPKSASERQIKKAFHKLAMKYHPDKNKSPDAEAKFREIAEAYETLSDANRRKEYDTLGHSAFTSGKGQRGSGSSFEQSFNFNFDDLFKDFGFFGQNQNTGSKKRFENHFQTRQDGGSSRQRHHFQEFSFGGGLFDDMFEDMEKMFSFSGFDSTNQHTVQTENRFHGSSKHCRTVTQRRGNMVTTYTDCSGQ</sequence>
<evidence type="ECO:0000250" key="1">
    <source>
        <dbReference type="UniProtKB" id="G3H0N9"/>
    </source>
</evidence>
<evidence type="ECO:0000250" key="2">
    <source>
        <dbReference type="UniProtKB" id="Q9QYI6"/>
    </source>
</evidence>
<evidence type="ECO:0000255" key="3"/>
<evidence type="ECO:0000255" key="4">
    <source>
        <dbReference type="PROSITE-ProRule" id="PRU00286"/>
    </source>
</evidence>
<evidence type="ECO:0000269" key="5">
    <source>
    </source>
</evidence>
<evidence type="ECO:0000269" key="6">
    <source>
    </source>
</evidence>
<evidence type="ECO:0000303" key="7">
    <source>
    </source>
</evidence>
<evidence type="ECO:0000303" key="8">
    <source>
    </source>
</evidence>
<evidence type="ECO:0000303" key="9">
    <source ref="1"/>
</evidence>
<evidence type="ECO:0000305" key="10"/>
<evidence type="ECO:0007744" key="11">
    <source>
    </source>
</evidence>
<evidence type="ECO:0007829" key="12">
    <source>
        <dbReference type="PDB" id="2CTR"/>
    </source>
</evidence>
<reference key="1">
    <citation type="submission" date="1999-05" db="EMBL/GenBank/DDBJ databases">
        <title>Human microvascular endothelial differentiation gene 1.</title>
        <authorList>
            <person name="Seki N."/>
            <person name="Hattori A."/>
            <person name="Muramatsu M."/>
            <person name="Miyajima N."/>
            <person name="Saito T."/>
        </authorList>
    </citation>
    <scope>NUCLEOTIDE SEQUENCE [MRNA]</scope>
</reference>
<reference key="2">
    <citation type="journal article" date="2000" name="Genome Res.">
        <title>Cloning and functional analysis of cDNAs with open reading frames for 300 previously undefined genes expressed in CD34+ hematopoietic stem/progenitor cells.</title>
        <authorList>
            <person name="Zhang Q.-H."/>
            <person name="Ye M."/>
            <person name="Wu X.-Y."/>
            <person name="Ren S.-X."/>
            <person name="Zhao M."/>
            <person name="Zhao C.-J."/>
            <person name="Fu G."/>
            <person name="Shen Y."/>
            <person name="Fan H.-Y."/>
            <person name="Lu G."/>
            <person name="Zhong M."/>
            <person name="Xu X.-R."/>
            <person name="Han Z.-G."/>
            <person name="Zhang J.-W."/>
            <person name="Tao J."/>
            <person name="Huang Q.-H."/>
            <person name="Zhou J."/>
            <person name="Hu G.-X."/>
            <person name="Gu J."/>
            <person name="Chen S.-J."/>
            <person name="Chen Z."/>
        </authorList>
    </citation>
    <scope>NUCLEOTIDE SEQUENCE [LARGE SCALE MRNA]</scope>
</reference>
<reference key="3">
    <citation type="journal article" date="2001" name="Genome Res.">
        <title>Towards a catalog of human genes and proteins: sequencing and analysis of 500 novel complete protein coding human cDNAs.</title>
        <authorList>
            <person name="Wiemann S."/>
            <person name="Weil B."/>
            <person name="Wellenreuther R."/>
            <person name="Gassenhuber J."/>
            <person name="Glassl S."/>
            <person name="Ansorge W."/>
            <person name="Boecher M."/>
            <person name="Bloecker H."/>
            <person name="Bauersachs S."/>
            <person name="Blum H."/>
            <person name="Lauber J."/>
            <person name="Duesterhoeft A."/>
            <person name="Beyer A."/>
            <person name="Koehrer K."/>
            <person name="Strack N."/>
            <person name="Mewes H.-W."/>
            <person name="Ottenwaelder B."/>
            <person name="Obermaier B."/>
            <person name="Tampe J."/>
            <person name="Heubner D."/>
            <person name="Wambutt R."/>
            <person name="Korn B."/>
            <person name="Klein M."/>
            <person name="Poustka A."/>
        </authorList>
    </citation>
    <scope>NUCLEOTIDE SEQUENCE [LARGE SCALE MRNA]</scope>
    <source>
        <tissue>Brain</tissue>
    </source>
</reference>
<reference key="4">
    <citation type="journal article" date="2003" name="Genome Res.">
        <title>The secreted protein discovery initiative (SPDI), a large-scale effort to identify novel human secreted and transmembrane proteins: a bioinformatics assessment.</title>
        <authorList>
            <person name="Clark H.F."/>
            <person name="Gurney A.L."/>
            <person name="Abaya E."/>
            <person name="Baker K."/>
            <person name="Baldwin D.T."/>
            <person name="Brush J."/>
            <person name="Chen J."/>
            <person name="Chow B."/>
            <person name="Chui C."/>
            <person name="Crowley C."/>
            <person name="Currell B."/>
            <person name="Deuel B."/>
            <person name="Dowd P."/>
            <person name="Eaton D."/>
            <person name="Foster J.S."/>
            <person name="Grimaldi C."/>
            <person name="Gu Q."/>
            <person name="Hass P.E."/>
            <person name="Heldens S."/>
            <person name="Huang A."/>
            <person name="Kim H.S."/>
            <person name="Klimowski L."/>
            <person name="Jin Y."/>
            <person name="Johnson S."/>
            <person name="Lee J."/>
            <person name="Lewis L."/>
            <person name="Liao D."/>
            <person name="Mark M.R."/>
            <person name="Robbie E."/>
            <person name="Sanchez C."/>
            <person name="Schoenfeld J."/>
            <person name="Seshagiri S."/>
            <person name="Simmons L."/>
            <person name="Singh J."/>
            <person name="Smith V."/>
            <person name="Stinson J."/>
            <person name="Vagts A."/>
            <person name="Vandlen R.L."/>
            <person name="Watanabe C."/>
            <person name="Wieand D."/>
            <person name="Woods K."/>
            <person name="Xie M.-H."/>
            <person name="Yansura D.G."/>
            <person name="Yi S."/>
            <person name="Yu G."/>
            <person name="Yuan J."/>
            <person name="Zhang M."/>
            <person name="Zhang Z."/>
            <person name="Goddard A.D."/>
            <person name="Wood W.I."/>
            <person name="Godowski P.J."/>
            <person name="Gray A.M."/>
        </authorList>
    </citation>
    <scope>NUCLEOTIDE SEQUENCE [LARGE SCALE MRNA]</scope>
</reference>
<reference key="5">
    <citation type="journal article" date="2004" name="Genome Res.">
        <title>The status, quality, and expansion of the NIH full-length cDNA project: the Mammalian Gene Collection (MGC).</title>
        <authorList>
            <consortium name="The MGC Project Team"/>
        </authorList>
    </citation>
    <scope>NUCLEOTIDE SEQUENCE [LARGE SCALE MRNA]</scope>
    <source>
        <tissue>Brain</tissue>
    </source>
</reference>
<reference key="6">
    <citation type="journal article" date="2002" name="J. Biol. Chem.">
        <title>Identification and characterization of a novel endoplasmic reticulum (ER) DnaJ homologue, which stimulates ATPase activity of BiP in vitro and is induced by ER stress.</title>
        <authorList>
            <person name="Shen Y."/>
            <person name="Meunier L."/>
            <person name="Hendershot L.M."/>
        </authorList>
    </citation>
    <scope>TISSUE SPECIFICITY</scope>
</reference>
<reference key="7">
    <citation type="journal article" date="2008" name="Mol. Biol. Cell">
        <title>ERdj4 and ERdj5 are required for endoplasmic reticulum-associated protein degradation of misfolded surfactant protein C.</title>
        <authorList>
            <person name="Dong M."/>
            <person name="Bridges J.P."/>
            <person name="Apsley K."/>
            <person name="Xu Y."/>
            <person name="Weaver T.E."/>
        </authorList>
    </citation>
    <scope>FUNCTION</scope>
</reference>
<reference key="8">
    <citation type="journal article" date="2013" name="J. Proteome Res.">
        <title>Toward a comprehensive characterization of a human cancer cell phosphoproteome.</title>
        <authorList>
            <person name="Zhou H."/>
            <person name="Di Palma S."/>
            <person name="Preisinger C."/>
            <person name="Peng M."/>
            <person name="Polat A.N."/>
            <person name="Heck A.J."/>
            <person name="Mohammed S."/>
        </authorList>
    </citation>
    <scope>PHOSPHORYLATION [LARGE SCALE ANALYSIS] AT SER-133</scope>
    <scope>IDENTIFICATION BY MASS SPECTROMETRY [LARGE SCALE ANALYSIS]</scope>
    <source>
        <tissue>Erythroleukemia</tissue>
    </source>
</reference>
<reference key="9">
    <citation type="journal article" date="2014" name="J. Proteomics">
        <title>An enzyme assisted RP-RPLC approach for in-depth analysis of human liver phosphoproteome.</title>
        <authorList>
            <person name="Bian Y."/>
            <person name="Song C."/>
            <person name="Cheng K."/>
            <person name="Dong M."/>
            <person name="Wang F."/>
            <person name="Huang J."/>
            <person name="Sun D."/>
            <person name="Wang L."/>
            <person name="Ye M."/>
            <person name="Zou H."/>
        </authorList>
    </citation>
    <scope>IDENTIFICATION BY MASS SPECTROMETRY [LARGE SCALE ANALYSIS]</scope>
    <source>
        <tissue>Liver</tissue>
    </source>
</reference>
<reference key="10">
    <citation type="submission" date="2005-11" db="PDB data bank">
        <title>Solution structure of J-domain from human DnaJ subfamily B member 9.</title>
        <authorList>
            <consortium name="RIKEN structural genomics initiative (RSGI)"/>
        </authorList>
    </citation>
    <scope>STRUCTURE BY NMR OF 24-102</scope>
</reference>
<feature type="signal peptide" evidence="3">
    <location>
        <begin position="1"/>
        <end position="23"/>
    </location>
</feature>
<feature type="chain" id="PRO_0000071031" description="DnaJ homolog subfamily B member 9">
    <location>
        <begin position="24"/>
        <end position="223"/>
    </location>
</feature>
<feature type="domain" description="J" evidence="4">
    <location>
        <begin position="26"/>
        <end position="90"/>
    </location>
</feature>
<feature type="region of interest" description="Divergent targeting domain" evidence="2">
    <location>
        <begin position="91"/>
        <end position="223"/>
    </location>
</feature>
<feature type="modified residue" description="Phosphoserine" evidence="11">
    <location>
        <position position="133"/>
    </location>
</feature>
<feature type="sequence variant" id="VAR_048911" description="In dbSNP:rs17155937.">
    <original>R</original>
    <variation>H</variation>
    <location>
        <position position="136"/>
    </location>
</feature>
<feature type="helix" evidence="12">
    <location>
        <begin position="27"/>
        <end position="31"/>
    </location>
</feature>
<feature type="helix" evidence="12">
    <location>
        <begin position="39"/>
        <end position="52"/>
    </location>
</feature>
<feature type="turn" evidence="12">
    <location>
        <begin position="55"/>
        <end position="57"/>
    </location>
</feature>
<feature type="helix" evidence="12">
    <location>
        <begin position="61"/>
        <end position="78"/>
    </location>
</feature>
<feature type="helix" evidence="12">
    <location>
        <begin position="81"/>
        <end position="88"/>
    </location>
</feature>
<feature type="helix" evidence="12">
    <location>
        <begin position="91"/>
        <end position="94"/>
    </location>
</feature>
<feature type="strand" evidence="12">
    <location>
        <begin position="97"/>
        <end position="99"/>
    </location>
</feature>
<gene>
    <name type="primary">DNAJB9</name>
    <name evidence="9" type="synonym">MDG1</name>
    <name evidence="7" type="ORF">UNQ743/PRO1471</name>
</gene>
<comment type="function">
    <text evidence="1 2 6">Co-chaperone for Hsp70 protein HSPA5/BiP that acts as a key repressor of the ERN1/IRE1-mediated unfolded protein response (UPR) (By similarity). J domain-containing co-chaperones stimulate the ATPase activity of Hsp70 proteins and are required for efficient substrate recognition by Hsp70 proteins (PubMed:18400946). In the unstressed endoplasmic reticulum, interacts with the luminal region of ERN1/IRE1 and selectively recruits HSPA5/BiP: HSPA5/BiP disrupts the dimerization of the active ERN1/IRE1 luminal region, thereby inactivating ERN1/IRE1 (By similarity). Also involved in endoplasmic reticulum-associated degradation (ERAD) of misfolded proteins. Required for survival of B-cell progenitors and normal antibody production (By similarity).</text>
</comment>
<comment type="subunit">
    <text evidence="1 2">Interacts with HSPA5/BiP; interaction is direct (By similarity). Interacts with ERN1/IRE1 (via the luminal region) (By similarity). Interacts with DERL1 (By similarity).</text>
</comment>
<comment type="interaction">
    <interactant intactId="EBI-713124">
        <id>Q9UBS3</id>
    </interactant>
    <interactant intactId="EBI-354921">
        <id>P11021</id>
        <label>HSPA5</label>
    </interactant>
    <organismsDiffer>false</organismsDiffer>
    <experiments>2</experiments>
</comment>
<comment type="subcellular location">
    <subcellularLocation>
        <location evidence="2">Endoplasmic reticulum lumen</location>
    </subcellularLocation>
</comment>
<comment type="tissue specificity">
    <text evidence="5">Widely expressed. Expressed at highest level in the liver, placenta and kidney (PubMed:11836248).</text>
</comment>
<comment type="domain">
    <text evidence="2">The J domain stimulates the ATPase activity of HSPA5/BiP, while the divergent targeting domain is required for efficient substrate recognition by HSPA5/BiP. The divergent targeting domain specifically recognizes and binds to aggregation-prone sequences.</text>
</comment>
<keyword id="KW-0002">3D-structure</keyword>
<keyword id="KW-0143">Chaperone</keyword>
<keyword id="KW-0256">Endoplasmic reticulum</keyword>
<keyword id="KW-0597">Phosphoprotein</keyword>
<keyword id="KW-1267">Proteomics identification</keyword>
<keyword id="KW-1185">Reference proteome</keyword>
<keyword id="KW-0732">Signal</keyword>
<keyword id="KW-0834">Unfolded protein response</keyword>